<reference key="1">
    <citation type="submission" date="2008-02" db="EMBL/GenBank/DDBJ databases">
        <title>Complete sequence of Shewanella woodyi ATCC 51908.</title>
        <authorList>
            <consortium name="US DOE Joint Genome Institute"/>
            <person name="Copeland A."/>
            <person name="Lucas S."/>
            <person name="Lapidus A."/>
            <person name="Glavina del Rio T."/>
            <person name="Dalin E."/>
            <person name="Tice H."/>
            <person name="Bruce D."/>
            <person name="Goodwin L."/>
            <person name="Pitluck S."/>
            <person name="Sims D."/>
            <person name="Brettin T."/>
            <person name="Detter J.C."/>
            <person name="Han C."/>
            <person name="Kuske C.R."/>
            <person name="Schmutz J."/>
            <person name="Larimer F."/>
            <person name="Land M."/>
            <person name="Hauser L."/>
            <person name="Kyrpides N."/>
            <person name="Lykidis A."/>
            <person name="Zhao J.-S."/>
            <person name="Richardson P."/>
        </authorList>
    </citation>
    <scope>NUCLEOTIDE SEQUENCE [LARGE SCALE GENOMIC DNA]</scope>
    <source>
        <strain>ATCC 51908 / MS32</strain>
    </source>
</reference>
<protein>
    <recommendedName>
        <fullName evidence="1">UPF0761 membrane protein Swoo_4618</fullName>
    </recommendedName>
</protein>
<sequence length="336" mass="37412">MKKKINLTQFQTLMLSIWHFMIHLKQRLAEDQINIRAGHLAYVSLLSLVPMVAVTMSMLSAFPVFQGIRGQIEDFIYNNFIPSAGDSVQVYINEFVDNASKGTAVGIAALMVVAIMLISSIDKSLNSIWHTKEKRSMVISFSMYWMVLTLGPVLMGASLVATSYVVSLKVFNGSDLSGVVPLLVERLPMLFSVATFLLIYMVVPNTKVKFFHALLGAIVAALMFEFGKKGFALYLTKFPTYEAIYGALATIPILFLWVYLSWMIVLLGAVITAAMPEYLDKKQSAVEDKNGEKEVVSQVPDVSFSISELPQEQSQEQSQEPSLKPVEESIKESRVK</sequence>
<comment type="subcellular location">
    <subcellularLocation>
        <location evidence="1">Cell inner membrane</location>
        <topology evidence="1">Multi-pass membrane protein</topology>
    </subcellularLocation>
</comment>
<comment type="similarity">
    <text evidence="1">Belongs to the UPF0761 family.</text>
</comment>
<feature type="chain" id="PRO_1000131566" description="UPF0761 membrane protein Swoo_4618">
    <location>
        <begin position="1"/>
        <end position="336"/>
    </location>
</feature>
<feature type="transmembrane region" description="Helical" evidence="1">
    <location>
        <begin position="45"/>
        <end position="65"/>
    </location>
</feature>
<feature type="transmembrane region" description="Helical" evidence="1">
    <location>
        <begin position="102"/>
        <end position="122"/>
    </location>
</feature>
<feature type="transmembrane region" description="Helical" evidence="1">
    <location>
        <begin position="137"/>
        <end position="157"/>
    </location>
</feature>
<feature type="transmembrane region" description="Helical" evidence="1">
    <location>
        <begin position="179"/>
        <end position="199"/>
    </location>
</feature>
<feature type="transmembrane region" description="Helical" evidence="1">
    <location>
        <begin position="213"/>
        <end position="233"/>
    </location>
</feature>
<feature type="transmembrane region" description="Helical" evidence="1">
    <location>
        <begin position="251"/>
        <end position="271"/>
    </location>
</feature>
<feature type="region of interest" description="Disordered" evidence="2">
    <location>
        <begin position="307"/>
        <end position="336"/>
    </location>
</feature>
<feature type="compositionally biased region" description="Low complexity" evidence="2">
    <location>
        <begin position="307"/>
        <end position="323"/>
    </location>
</feature>
<feature type="compositionally biased region" description="Basic and acidic residues" evidence="2">
    <location>
        <begin position="325"/>
        <end position="336"/>
    </location>
</feature>
<name>Y4618_SHEWM</name>
<organism>
    <name type="scientific">Shewanella woodyi (strain ATCC 51908 / MS32)</name>
    <dbReference type="NCBI Taxonomy" id="392500"/>
    <lineage>
        <taxon>Bacteria</taxon>
        <taxon>Pseudomonadati</taxon>
        <taxon>Pseudomonadota</taxon>
        <taxon>Gammaproteobacteria</taxon>
        <taxon>Alteromonadales</taxon>
        <taxon>Shewanellaceae</taxon>
        <taxon>Shewanella</taxon>
    </lineage>
</organism>
<proteinExistence type="inferred from homology"/>
<keyword id="KW-0997">Cell inner membrane</keyword>
<keyword id="KW-1003">Cell membrane</keyword>
<keyword id="KW-0472">Membrane</keyword>
<keyword id="KW-1185">Reference proteome</keyword>
<keyword id="KW-0812">Transmembrane</keyword>
<keyword id="KW-1133">Transmembrane helix</keyword>
<dbReference type="EMBL" id="CP000961">
    <property type="protein sequence ID" value="ACA88868.1"/>
    <property type="molecule type" value="Genomic_DNA"/>
</dbReference>
<dbReference type="RefSeq" id="WP_012327193.1">
    <property type="nucleotide sequence ID" value="NC_010506.1"/>
</dbReference>
<dbReference type="STRING" id="392500.Swoo_4618"/>
<dbReference type="KEGG" id="swd:Swoo_4618"/>
<dbReference type="eggNOG" id="COG1295">
    <property type="taxonomic scope" value="Bacteria"/>
</dbReference>
<dbReference type="HOGENOM" id="CLU_032288_0_0_6"/>
<dbReference type="Proteomes" id="UP000002168">
    <property type="component" value="Chromosome"/>
</dbReference>
<dbReference type="GO" id="GO:0005886">
    <property type="term" value="C:plasma membrane"/>
    <property type="evidence" value="ECO:0007669"/>
    <property type="project" value="UniProtKB-SubCell"/>
</dbReference>
<dbReference type="HAMAP" id="MF_00672">
    <property type="entry name" value="UPF0761"/>
    <property type="match status" value="1"/>
</dbReference>
<dbReference type="InterPro" id="IPR023679">
    <property type="entry name" value="UPF0761_bac"/>
</dbReference>
<dbReference type="InterPro" id="IPR017039">
    <property type="entry name" value="Virul_fac_BrkB"/>
</dbReference>
<dbReference type="NCBIfam" id="NF002457">
    <property type="entry name" value="PRK01637.1"/>
    <property type="match status" value="1"/>
</dbReference>
<dbReference type="NCBIfam" id="TIGR00765">
    <property type="entry name" value="yihY_not_rbn"/>
    <property type="match status" value="1"/>
</dbReference>
<dbReference type="PANTHER" id="PTHR30213">
    <property type="entry name" value="INNER MEMBRANE PROTEIN YHJD"/>
    <property type="match status" value="1"/>
</dbReference>
<dbReference type="PANTHER" id="PTHR30213:SF0">
    <property type="entry name" value="UPF0761 MEMBRANE PROTEIN YIHY"/>
    <property type="match status" value="1"/>
</dbReference>
<dbReference type="Pfam" id="PF03631">
    <property type="entry name" value="Virul_fac_BrkB"/>
    <property type="match status" value="1"/>
</dbReference>
<dbReference type="PIRSF" id="PIRSF035875">
    <property type="entry name" value="RNase_BN"/>
    <property type="match status" value="1"/>
</dbReference>
<gene>
    <name type="ordered locus">Swoo_4618</name>
</gene>
<accession>B1KLY8</accession>
<evidence type="ECO:0000255" key="1">
    <source>
        <dbReference type="HAMAP-Rule" id="MF_00672"/>
    </source>
</evidence>
<evidence type="ECO:0000256" key="2">
    <source>
        <dbReference type="SAM" id="MobiDB-lite"/>
    </source>
</evidence>